<evidence type="ECO:0000255" key="1">
    <source>
        <dbReference type="HAMAP-Rule" id="MF_00145"/>
    </source>
</evidence>
<feature type="chain" id="PRO_1000192827" description="Phosphoglycerate kinase">
    <location>
        <begin position="1"/>
        <end position="397"/>
    </location>
</feature>
<feature type="binding site" evidence="1">
    <location>
        <begin position="25"/>
        <end position="27"/>
    </location>
    <ligand>
        <name>substrate</name>
    </ligand>
</feature>
<feature type="binding site" evidence="1">
    <location>
        <position position="41"/>
    </location>
    <ligand>
        <name>substrate</name>
    </ligand>
</feature>
<feature type="binding site" evidence="1">
    <location>
        <begin position="64"/>
        <end position="67"/>
    </location>
    <ligand>
        <name>substrate</name>
    </ligand>
</feature>
<feature type="binding site" evidence="1">
    <location>
        <position position="118"/>
    </location>
    <ligand>
        <name>substrate</name>
    </ligand>
</feature>
<feature type="binding site" evidence="1">
    <location>
        <position position="151"/>
    </location>
    <ligand>
        <name>substrate</name>
    </ligand>
</feature>
<feature type="binding site" evidence="1">
    <location>
        <position position="202"/>
    </location>
    <ligand>
        <name>ATP</name>
        <dbReference type="ChEBI" id="CHEBI:30616"/>
    </ligand>
</feature>
<feature type="binding site" evidence="1">
    <location>
        <position position="324"/>
    </location>
    <ligand>
        <name>ATP</name>
        <dbReference type="ChEBI" id="CHEBI:30616"/>
    </ligand>
</feature>
<feature type="binding site" evidence="1">
    <location>
        <begin position="350"/>
        <end position="353"/>
    </location>
    <ligand>
        <name>ATP</name>
        <dbReference type="ChEBI" id="CHEBI:30616"/>
    </ligand>
</feature>
<gene>
    <name evidence="1" type="primary">pgk</name>
    <name type="ordered locus">Dtpsy_3401</name>
</gene>
<organism>
    <name type="scientific">Acidovorax ebreus (strain TPSY)</name>
    <name type="common">Diaphorobacter sp. (strain TPSY)</name>
    <dbReference type="NCBI Taxonomy" id="535289"/>
    <lineage>
        <taxon>Bacteria</taxon>
        <taxon>Pseudomonadati</taxon>
        <taxon>Pseudomonadota</taxon>
        <taxon>Betaproteobacteria</taxon>
        <taxon>Burkholderiales</taxon>
        <taxon>Comamonadaceae</taxon>
        <taxon>Diaphorobacter</taxon>
    </lineage>
</organism>
<protein>
    <recommendedName>
        <fullName evidence="1">Phosphoglycerate kinase</fullName>
        <ecNumber evidence="1">2.7.2.3</ecNumber>
    </recommendedName>
</protein>
<comment type="catalytic activity">
    <reaction evidence="1">
        <text>(2R)-3-phosphoglycerate + ATP = (2R)-3-phospho-glyceroyl phosphate + ADP</text>
        <dbReference type="Rhea" id="RHEA:14801"/>
        <dbReference type="ChEBI" id="CHEBI:30616"/>
        <dbReference type="ChEBI" id="CHEBI:57604"/>
        <dbReference type="ChEBI" id="CHEBI:58272"/>
        <dbReference type="ChEBI" id="CHEBI:456216"/>
        <dbReference type="EC" id="2.7.2.3"/>
    </reaction>
</comment>
<comment type="pathway">
    <text evidence="1">Carbohydrate degradation; glycolysis; pyruvate from D-glyceraldehyde 3-phosphate: step 2/5.</text>
</comment>
<comment type="subunit">
    <text evidence="1">Monomer.</text>
</comment>
<comment type="subcellular location">
    <subcellularLocation>
        <location evidence="1">Cytoplasm</location>
    </subcellularLocation>
</comment>
<comment type="similarity">
    <text evidence="1">Belongs to the phosphoglycerate kinase family.</text>
</comment>
<keyword id="KW-0067">ATP-binding</keyword>
<keyword id="KW-0963">Cytoplasm</keyword>
<keyword id="KW-0324">Glycolysis</keyword>
<keyword id="KW-0418">Kinase</keyword>
<keyword id="KW-0547">Nucleotide-binding</keyword>
<keyword id="KW-1185">Reference proteome</keyword>
<keyword id="KW-0808">Transferase</keyword>
<name>PGK_ACIET</name>
<dbReference type="EC" id="2.7.2.3" evidence="1"/>
<dbReference type="EMBL" id="CP001392">
    <property type="protein sequence ID" value="ACM34828.1"/>
    <property type="molecule type" value="Genomic_DNA"/>
</dbReference>
<dbReference type="RefSeq" id="WP_015914613.1">
    <property type="nucleotide sequence ID" value="NC_011992.1"/>
</dbReference>
<dbReference type="SMR" id="B9MI90"/>
<dbReference type="KEGG" id="dia:Dtpsy_3401"/>
<dbReference type="eggNOG" id="COG0126">
    <property type="taxonomic scope" value="Bacteria"/>
</dbReference>
<dbReference type="HOGENOM" id="CLU_025427_0_2_4"/>
<dbReference type="UniPathway" id="UPA00109">
    <property type="reaction ID" value="UER00185"/>
</dbReference>
<dbReference type="Proteomes" id="UP000000450">
    <property type="component" value="Chromosome"/>
</dbReference>
<dbReference type="GO" id="GO:0005829">
    <property type="term" value="C:cytosol"/>
    <property type="evidence" value="ECO:0007669"/>
    <property type="project" value="TreeGrafter"/>
</dbReference>
<dbReference type="GO" id="GO:0043531">
    <property type="term" value="F:ADP binding"/>
    <property type="evidence" value="ECO:0007669"/>
    <property type="project" value="TreeGrafter"/>
</dbReference>
<dbReference type="GO" id="GO:0005524">
    <property type="term" value="F:ATP binding"/>
    <property type="evidence" value="ECO:0007669"/>
    <property type="project" value="UniProtKB-KW"/>
</dbReference>
<dbReference type="GO" id="GO:0004618">
    <property type="term" value="F:phosphoglycerate kinase activity"/>
    <property type="evidence" value="ECO:0007669"/>
    <property type="project" value="UniProtKB-UniRule"/>
</dbReference>
<dbReference type="GO" id="GO:0006094">
    <property type="term" value="P:gluconeogenesis"/>
    <property type="evidence" value="ECO:0007669"/>
    <property type="project" value="TreeGrafter"/>
</dbReference>
<dbReference type="GO" id="GO:0006096">
    <property type="term" value="P:glycolytic process"/>
    <property type="evidence" value="ECO:0007669"/>
    <property type="project" value="UniProtKB-UniRule"/>
</dbReference>
<dbReference type="FunFam" id="3.40.50.1260:FF:000001">
    <property type="entry name" value="Phosphoglycerate kinase"/>
    <property type="match status" value="1"/>
</dbReference>
<dbReference type="FunFam" id="3.40.50.1260:FF:000002">
    <property type="entry name" value="Phosphoglycerate kinase"/>
    <property type="match status" value="1"/>
</dbReference>
<dbReference type="Gene3D" id="3.40.50.1260">
    <property type="entry name" value="Phosphoglycerate kinase, N-terminal domain"/>
    <property type="match status" value="2"/>
</dbReference>
<dbReference type="HAMAP" id="MF_00145">
    <property type="entry name" value="Phosphoglyc_kinase"/>
    <property type="match status" value="1"/>
</dbReference>
<dbReference type="InterPro" id="IPR001576">
    <property type="entry name" value="Phosphoglycerate_kinase"/>
</dbReference>
<dbReference type="InterPro" id="IPR015911">
    <property type="entry name" value="Phosphoglycerate_kinase_CS"/>
</dbReference>
<dbReference type="InterPro" id="IPR015824">
    <property type="entry name" value="Phosphoglycerate_kinase_N"/>
</dbReference>
<dbReference type="InterPro" id="IPR036043">
    <property type="entry name" value="Phosphoglycerate_kinase_sf"/>
</dbReference>
<dbReference type="PANTHER" id="PTHR11406">
    <property type="entry name" value="PHOSPHOGLYCERATE KINASE"/>
    <property type="match status" value="1"/>
</dbReference>
<dbReference type="PANTHER" id="PTHR11406:SF23">
    <property type="entry name" value="PHOSPHOGLYCERATE KINASE 1, CHLOROPLASTIC-RELATED"/>
    <property type="match status" value="1"/>
</dbReference>
<dbReference type="Pfam" id="PF00162">
    <property type="entry name" value="PGK"/>
    <property type="match status" value="1"/>
</dbReference>
<dbReference type="PIRSF" id="PIRSF000724">
    <property type="entry name" value="Pgk"/>
    <property type="match status" value="1"/>
</dbReference>
<dbReference type="PRINTS" id="PR00477">
    <property type="entry name" value="PHGLYCKINASE"/>
</dbReference>
<dbReference type="SUPFAM" id="SSF53748">
    <property type="entry name" value="Phosphoglycerate kinase"/>
    <property type="match status" value="1"/>
</dbReference>
<dbReference type="PROSITE" id="PS00111">
    <property type="entry name" value="PGLYCERATE_KINASE"/>
    <property type="match status" value="1"/>
</dbReference>
<proteinExistence type="inferred from homology"/>
<sequence length="397" mass="41132">MHILRFSDLCAQGQARGQRVFIRADLNVPQDDAGRITEDTRIRASVPCIQMALEAGAAVMVTSHLGRPTEGEFKPEDSLAPVAQRLSELLGREVPLVADWVDGVQVAPGQVVLLENCRVNKGEKKNNPELAKKMAQLCDIYVNDAFGTAHRAEGTTYGIAEYAKVACAGPLLAAEIDAIQTALANPKRPLVAIVAGSKVSTKLTILQSLSKNVDGLVVGGGIANTFMLAAGLPIGKSLAEPDLVNEAKAVIAAMAARGAEVPIPTDVVVAKAFAADAPATVKKASEVAEDDLILDIGPETAAKLAAQLKAAGTIVWNGPVGVFEFDQFAGGTKAIAQAIAESSAFSIAGGGDTLAAIAKYGIEKDVGYISTGGGAFLEVLEGKTLPAFEILQKRAAG</sequence>
<accession>B9MI90</accession>
<reference key="1">
    <citation type="submission" date="2009-01" db="EMBL/GenBank/DDBJ databases">
        <title>Complete sequence of Diaphorobacter sp. TPSY.</title>
        <authorList>
            <consortium name="US DOE Joint Genome Institute"/>
            <person name="Lucas S."/>
            <person name="Copeland A."/>
            <person name="Lapidus A."/>
            <person name="Glavina del Rio T."/>
            <person name="Tice H."/>
            <person name="Bruce D."/>
            <person name="Goodwin L."/>
            <person name="Pitluck S."/>
            <person name="Chertkov O."/>
            <person name="Brettin T."/>
            <person name="Detter J.C."/>
            <person name="Han C."/>
            <person name="Larimer F."/>
            <person name="Land M."/>
            <person name="Hauser L."/>
            <person name="Kyrpides N."/>
            <person name="Mikhailova N."/>
            <person name="Coates J.D."/>
        </authorList>
    </citation>
    <scope>NUCLEOTIDE SEQUENCE [LARGE SCALE GENOMIC DNA]</scope>
    <source>
        <strain>TPSY</strain>
    </source>
</reference>